<gene>
    <name evidence="1" type="primary">rplL</name>
    <name type="ordered locus">PPA1885</name>
</gene>
<feature type="chain" id="PRO_0000243470" description="Large ribosomal subunit protein bL12">
    <location>
        <begin position="1"/>
        <end position="130"/>
    </location>
</feature>
<dbReference type="EMBL" id="AE017283">
    <property type="protein sequence ID" value="AAT83608.1"/>
    <property type="molecule type" value="Genomic_DNA"/>
</dbReference>
<dbReference type="RefSeq" id="WP_002514890.1">
    <property type="nucleotide sequence ID" value="NZ_CP025935.1"/>
</dbReference>
<dbReference type="SMR" id="Q6A6K5"/>
<dbReference type="EnsemblBacteria" id="AAT83608">
    <property type="protein sequence ID" value="AAT83608"/>
    <property type="gene ID" value="PPA1885"/>
</dbReference>
<dbReference type="GeneID" id="92857828"/>
<dbReference type="KEGG" id="pac:PPA1885"/>
<dbReference type="eggNOG" id="COG0222">
    <property type="taxonomic scope" value="Bacteria"/>
</dbReference>
<dbReference type="HOGENOM" id="CLU_086499_3_0_11"/>
<dbReference type="Proteomes" id="UP000000603">
    <property type="component" value="Chromosome"/>
</dbReference>
<dbReference type="GO" id="GO:0022625">
    <property type="term" value="C:cytosolic large ribosomal subunit"/>
    <property type="evidence" value="ECO:0007669"/>
    <property type="project" value="TreeGrafter"/>
</dbReference>
<dbReference type="GO" id="GO:0003729">
    <property type="term" value="F:mRNA binding"/>
    <property type="evidence" value="ECO:0007669"/>
    <property type="project" value="TreeGrafter"/>
</dbReference>
<dbReference type="GO" id="GO:0003735">
    <property type="term" value="F:structural constituent of ribosome"/>
    <property type="evidence" value="ECO:0007669"/>
    <property type="project" value="InterPro"/>
</dbReference>
<dbReference type="GO" id="GO:0006412">
    <property type="term" value="P:translation"/>
    <property type="evidence" value="ECO:0007669"/>
    <property type="project" value="UniProtKB-UniRule"/>
</dbReference>
<dbReference type="CDD" id="cd00387">
    <property type="entry name" value="Ribosomal_L7_L12"/>
    <property type="match status" value="1"/>
</dbReference>
<dbReference type="FunFam" id="1.20.5.710:FF:000005">
    <property type="entry name" value="50S ribosomal protein L7/L12"/>
    <property type="match status" value="1"/>
</dbReference>
<dbReference type="FunFam" id="3.30.1390.10:FF:000001">
    <property type="entry name" value="50S ribosomal protein L7/L12"/>
    <property type="match status" value="1"/>
</dbReference>
<dbReference type="Gene3D" id="3.30.1390.10">
    <property type="match status" value="1"/>
</dbReference>
<dbReference type="Gene3D" id="1.20.5.710">
    <property type="entry name" value="Single helix bin"/>
    <property type="match status" value="1"/>
</dbReference>
<dbReference type="HAMAP" id="MF_00368">
    <property type="entry name" value="Ribosomal_bL12"/>
    <property type="match status" value="1"/>
</dbReference>
<dbReference type="InterPro" id="IPR000206">
    <property type="entry name" value="Ribosomal_bL12"/>
</dbReference>
<dbReference type="InterPro" id="IPR013823">
    <property type="entry name" value="Ribosomal_bL12_C"/>
</dbReference>
<dbReference type="InterPro" id="IPR014719">
    <property type="entry name" value="Ribosomal_bL12_C/ClpS-like"/>
</dbReference>
<dbReference type="InterPro" id="IPR008932">
    <property type="entry name" value="Ribosomal_bL12_oligo"/>
</dbReference>
<dbReference type="InterPro" id="IPR036235">
    <property type="entry name" value="Ribosomal_bL12_oligo_N_sf"/>
</dbReference>
<dbReference type="NCBIfam" id="TIGR00855">
    <property type="entry name" value="L12"/>
    <property type="match status" value="1"/>
</dbReference>
<dbReference type="PANTHER" id="PTHR45987">
    <property type="entry name" value="39S RIBOSOMAL PROTEIN L12"/>
    <property type="match status" value="1"/>
</dbReference>
<dbReference type="PANTHER" id="PTHR45987:SF4">
    <property type="entry name" value="LARGE RIBOSOMAL SUBUNIT PROTEIN BL12M"/>
    <property type="match status" value="1"/>
</dbReference>
<dbReference type="Pfam" id="PF00542">
    <property type="entry name" value="Ribosomal_L12"/>
    <property type="match status" value="1"/>
</dbReference>
<dbReference type="Pfam" id="PF16320">
    <property type="entry name" value="Ribosomal_L12_N"/>
    <property type="match status" value="1"/>
</dbReference>
<dbReference type="SUPFAM" id="SSF54736">
    <property type="entry name" value="ClpS-like"/>
    <property type="match status" value="1"/>
</dbReference>
<dbReference type="SUPFAM" id="SSF48300">
    <property type="entry name" value="Ribosomal protein L7/12, oligomerisation (N-terminal) domain"/>
    <property type="match status" value="1"/>
</dbReference>
<reference key="1">
    <citation type="journal article" date="2004" name="Science">
        <title>The complete genome sequence of Propionibacterium acnes, a commensal of human skin.</title>
        <authorList>
            <person name="Brueggemann H."/>
            <person name="Henne A."/>
            <person name="Hoster F."/>
            <person name="Liesegang H."/>
            <person name="Wiezer A."/>
            <person name="Strittmatter A."/>
            <person name="Hujer S."/>
            <person name="Duerre P."/>
            <person name="Gottschalk G."/>
        </authorList>
    </citation>
    <scope>NUCLEOTIDE SEQUENCE [LARGE SCALE GENOMIC DNA]</scope>
    <source>
        <strain>DSM 16379 / KPA171202</strain>
    </source>
</reference>
<keyword id="KW-0687">Ribonucleoprotein</keyword>
<keyword id="KW-0689">Ribosomal protein</keyword>
<comment type="function">
    <text evidence="1">Forms part of the ribosomal stalk which helps the ribosome interact with GTP-bound translation factors. Is thus essential for accurate translation.</text>
</comment>
<comment type="subunit">
    <text evidence="1">Homodimer. Part of the ribosomal stalk of the 50S ribosomal subunit. Forms a multimeric L10(L12)X complex, where L10 forms an elongated spine to which 2 to 4 L12 dimers bind in a sequential fashion. Binds GTP-bound translation factors.</text>
</comment>
<comment type="similarity">
    <text evidence="1">Belongs to the bacterial ribosomal protein bL12 family.</text>
</comment>
<accession>Q6A6K5</accession>
<evidence type="ECO:0000255" key="1">
    <source>
        <dbReference type="HAMAP-Rule" id="MF_00368"/>
    </source>
</evidence>
<evidence type="ECO:0000305" key="2"/>
<proteinExistence type="inferred from homology"/>
<sequence>MAKLSNEELLDAFKEMTLIELSEFVKQFEETFDVSAAAPVAVAAAGAPAAGGEAAPAEEEKDEFDVILESAGDKKIQVIKEVRGLTSLGLKDAKDLVESAPKPVLEKAKKEDAEKAKEALEAAGATVTLK</sequence>
<protein>
    <recommendedName>
        <fullName evidence="1">Large ribosomal subunit protein bL12</fullName>
    </recommendedName>
    <alternativeName>
        <fullName evidence="2">50S ribosomal protein L7/L12</fullName>
    </alternativeName>
</protein>
<name>RL7_CUTAK</name>
<organism>
    <name type="scientific">Cutibacterium acnes (strain DSM 16379 / KPA171202)</name>
    <name type="common">Propionibacterium acnes</name>
    <dbReference type="NCBI Taxonomy" id="267747"/>
    <lineage>
        <taxon>Bacteria</taxon>
        <taxon>Bacillati</taxon>
        <taxon>Actinomycetota</taxon>
        <taxon>Actinomycetes</taxon>
        <taxon>Propionibacteriales</taxon>
        <taxon>Propionibacteriaceae</taxon>
        <taxon>Cutibacterium</taxon>
    </lineage>
</organism>